<proteinExistence type="evidence at transcript level"/>
<reference key="1">
    <citation type="submission" date="2004-11" db="EMBL/GenBank/DDBJ databases">
        <authorList>
            <consortium name="The German cDNA consortium"/>
        </authorList>
    </citation>
    <scope>NUCLEOTIDE SEQUENCE [LARGE SCALE MRNA]</scope>
    <source>
        <tissue>Kidney</tissue>
    </source>
</reference>
<evidence type="ECO:0000250" key="1"/>
<evidence type="ECO:0000250" key="2">
    <source>
        <dbReference type="UniProtKB" id="A7VJC2"/>
    </source>
</evidence>
<evidence type="ECO:0000250" key="3">
    <source>
        <dbReference type="UniProtKB" id="O88569"/>
    </source>
</evidence>
<evidence type="ECO:0000250" key="4">
    <source>
        <dbReference type="UniProtKB" id="P22626"/>
    </source>
</evidence>
<evidence type="ECO:0000255" key="5"/>
<evidence type="ECO:0000255" key="6">
    <source>
        <dbReference type="PROSITE-ProRule" id="PRU00176"/>
    </source>
</evidence>
<evidence type="ECO:0000256" key="7">
    <source>
        <dbReference type="SAM" id="MobiDB-lite"/>
    </source>
</evidence>
<name>ROA2_PONAB</name>
<feature type="chain" id="PRO_0000273980" description="Heterogeneous nuclear ribonucleoproteins A2/B1">
    <location>
        <begin position="1"/>
        <end position="353"/>
    </location>
</feature>
<feature type="domain" description="RRM 1" evidence="6">
    <location>
        <begin position="21"/>
        <end position="104"/>
    </location>
</feature>
<feature type="domain" description="RRM 2" evidence="6">
    <location>
        <begin position="112"/>
        <end position="191"/>
    </location>
</feature>
<feature type="region of interest" description="Disordered" evidence="4">
    <location>
        <begin position="193"/>
        <end position="353"/>
    </location>
</feature>
<feature type="region of interest" description="Nuclear targeting sequence" evidence="1">
    <location>
        <begin position="308"/>
        <end position="347"/>
    </location>
</feature>
<feature type="short sequence motif" description="Nuclear localization signal" evidence="5">
    <location>
        <begin position="9"/>
        <end position="15"/>
    </location>
</feature>
<feature type="compositionally biased region" description="Gly residues" evidence="7">
    <location>
        <begin position="202"/>
        <end position="223"/>
    </location>
</feature>
<feature type="compositionally biased region" description="Gly residues" evidence="7">
    <location>
        <begin position="320"/>
        <end position="353"/>
    </location>
</feature>
<feature type="modified residue" description="N-acetylmethionine" evidence="4">
    <location>
        <position position="1"/>
    </location>
</feature>
<feature type="modified residue" description="Phosphothreonine" evidence="4">
    <location>
        <position position="4"/>
    </location>
</feature>
<feature type="modified residue" description="Phosphoserine" evidence="4">
    <location>
        <position position="29"/>
    </location>
</feature>
<feature type="modified residue" description="Omega-N-methylarginine" evidence="3">
    <location>
        <position position="38"/>
    </location>
</feature>
<feature type="modified residue" description="Phosphoserine" evidence="4">
    <location>
        <position position="85"/>
    </location>
</feature>
<feature type="modified residue" description="N6,N6-dimethyllysine; alternate" evidence="4">
    <location>
        <position position="104"/>
    </location>
</feature>
<feature type="modified residue" description="Phosphothreonine" evidence="4">
    <location>
        <position position="140"/>
    </location>
</feature>
<feature type="modified residue" description="Phosphoserine" evidence="4">
    <location>
        <position position="149"/>
    </location>
</feature>
<feature type="modified residue" description="Phosphothreonine" evidence="4">
    <location>
        <position position="159"/>
    </location>
</feature>
<feature type="modified residue" description="N6-acetyllysine; alternate" evidence="4">
    <location>
        <position position="168"/>
    </location>
</feature>
<feature type="modified residue" description="N6-acetyllysine; alternate" evidence="4">
    <location>
        <position position="173"/>
    </location>
</feature>
<feature type="modified residue" description="Phosphothreonine" evidence="4">
    <location>
        <position position="176"/>
    </location>
</feature>
<feature type="modified residue" description="Phosphoserine" evidence="4">
    <location>
        <position position="189"/>
    </location>
</feature>
<feature type="modified residue" description="Phosphoserine" evidence="4">
    <location>
        <position position="201"/>
    </location>
</feature>
<feature type="modified residue" description="Asymmetric dimethylarginine; alternate" evidence="3">
    <location>
        <position position="203"/>
    </location>
</feature>
<feature type="modified residue" description="Dimethylated arginine; alternate" evidence="4">
    <location>
        <position position="203"/>
    </location>
</feature>
<feature type="modified residue" description="Omega-N-methylarginine; alternate" evidence="4">
    <location>
        <position position="203"/>
    </location>
</feature>
<feature type="modified residue" description="Phosphoserine" evidence="4">
    <location>
        <position position="212"/>
    </location>
</feature>
<feature type="modified residue" description="Asymmetric dimethylarginine; alternate" evidence="3">
    <location>
        <position position="213"/>
    </location>
</feature>
<feature type="modified residue" description="Dimethylated arginine; alternate" evidence="4">
    <location>
        <position position="213"/>
    </location>
</feature>
<feature type="modified residue" description="Omega-N-methylarginine; alternate" evidence="4">
    <location>
        <position position="213"/>
    </location>
</feature>
<feature type="modified residue" description="Phosphoserine" evidence="4">
    <location>
        <position position="225"/>
    </location>
</feature>
<feature type="modified residue" description="Omega-N-methylarginine" evidence="4">
    <location>
        <position position="228"/>
    </location>
</feature>
<feature type="modified residue" description="Phosphoserine" evidence="4">
    <location>
        <position position="231"/>
    </location>
</feature>
<feature type="modified residue" description="Phosphoserine" evidence="4">
    <location>
        <position position="236"/>
    </location>
</feature>
<feature type="modified residue" description="Omega-N-methylarginine" evidence="4">
    <location>
        <position position="238"/>
    </location>
</feature>
<feature type="modified residue" description="Phosphoserine" evidence="4">
    <location>
        <position position="259"/>
    </location>
</feature>
<feature type="modified residue" description="Asymmetric dimethylarginine; alternate" evidence="2">
    <location>
        <position position="266"/>
    </location>
</feature>
<feature type="modified residue" description="Omega-N-methylarginine; alternate" evidence="4">
    <location>
        <position position="266"/>
    </location>
</feature>
<feature type="modified residue" description="Phosphoserine" evidence="4">
    <location>
        <position position="324"/>
    </location>
</feature>
<feature type="modified residue" description="Omega-N-methylarginine" evidence="4">
    <location>
        <position position="325"/>
    </location>
</feature>
<feature type="modified residue" description="Phosphotyrosine" evidence="4">
    <location>
        <position position="331"/>
    </location>
</feature>
<feature type="modified residue" description="Phosphoserine" evidence="4">
    <location>
        <position position="341"/>
    </location>
</feature>
<feature type="modified residue" description="Phosphoserine" evidence="4">
    <location>
        <position position="344"/>
    </location>
</feature>
<feature type="modified residue" description="Phosphotyrosine" evidence="4">
    <location>
        <position position="347"/>
    </location>
</feature>
<feature type="modified residue" description="Omega-N-methylarginine" evidence="4">
    <location>
        <position position="350"/>
    </location>
</feature>
<feature type="cross-link" description="Glycyl lysine isopeptide (Lys-Gly) (interchain with G-Cter in SUMO2)" evidence="4">
    <location>
        <position position="22"/>
    </location>
</feature>
<feature type="cross-link" description="Glycyl lysine isopeptide (Lys-Gly) (interchain with G-Cter in SUMO2); alternate" evidence="4">
    <location>
        <position position="104"/>
    </location>
</feature>
<feature type="cross-link" description="Glycyl lysine isopeptide (Lys-Gly) (interchain with G-Cter in SUMO2)" evidence="4">
    <location>
        <position position="112"/>
    </location>
</feature>
<feature type="cross-link" description="Glycyl lysine isopeptide (Lys-Gly) (interchain with G-Cter in SUMO2)" evidence="4">
    <location>
        <position position="120"/>
    </location>
</feature>
<feature type="cross-link" description="Glycyl lysine isopeptide (Lys-Gly) (interchain with G-Cter in SUMO2)" evidence="4">
    <location>
        <position position="137"/>
    </location>
</feature>
<feature type="cross-link" description="Glycyl lysine isopeptide (Lys-Gly) (interchain with G-Cter in SUMO2)" evidence="4">
    <location>
        <position position="152"/>
    </location>
</feature>
<feature type="cross-link" description="Glycyl lysine isopeptide (Lys-Gly) (interchain with G-Cter in SUMO2); alternate" evidence="4">
    <location>
        <position position="168"/>
    </location>
</feature>
<feature type="cross-link" description="Glycyl lysine isopeptide (Lys-Gly) (interchain with G-Cter in SUMO2); alternate" evidence="4">
    <location>
        <position position="173"/>
    </location>
</feature>
<feature type="cross-link" description="Glycyl lysine isopeptide (Lys-Gly) (interchain with G-Cter in SUMO2)" evidence="4">
    <location>
        <position position="186"/>
    </location>
</feature>
<protein>
    <recommendedName>
        <fullName>Heterogeneous nuclear ribonucleoproteins A2/B1</fullName>
        <shortName>hnRNP A2/B1</shortName>
    </recommendedName>
</protein>
<keyword id="KW-0007">Acetylation</keyword>
<keyword id="KW-1017">Isopeptide bond</keyword>
<keyword id="KW-0488">Methylation</keyword>
<keyword id="KW-0507">mRNA processing</keyword>
<keyword id="KW-0508">mRNA splicing</keyword>
<keyword id="KW-0509">mRNA transport</keyword>
<keyword id="KW-0539">Nucleus</keyword>
<keyword id="KW-0597">Phosphoprotein</keyword>
<keyword id="KW-1185">Reference proteome</keyword>
<keyword id="KW-0677">Repeat</keyword>
<keyword id="KW-0687">Ribonucleoprotein</keyword>
<keyword id="KW-0694">RNA-binding</keyword>
<keyword id="KW-0964">Secreted</keyword>
<keyword id="KW-0747">Spliceosome</keyword>
<keyword id="KW-0813">Transport</keyword>
<keyword id="KW-0832">Ubl conjugation</keyword>
<sequence>MEKTLETVPLERKKREKEQFRKLFIGGLSFETTEESLRNYYEQWGKLTDCVVMRDPASKRSRGFGFVTFSSMAEVDAAMAARPHSIDGRVVEPKRAVAREESGKPGAHVTVKKLFVGGIKEDTEEHHLRDYFEEYGKIDTIEIITDRQSGKKRGFGFVTFDDHDPVDKIVLQKHHTINGHNAEVRKALSRQEMQEVQSSRSGRGGNFGFGDSRGGGGNFGPGPGSNFRGGSDGYGSGRGFGDGYNGYGGGPGGGNFGGSPGYGGGRGGYGGGGPGYGNQGGGYGGGYDNYGGGNYGSGNYNDFGNYNQQPSNYGPMKSGNFGGSRNMGGPYGGGNYGPGGSGGSGGYGGRSRY</sequence>
<comment type="function">
    <text evidence="2 4">Heterogeneous nuclear ribonucleoprotein (hnRNP) that associates with nascent pre-mRNAs, packaging them into hnRNP particles. The hnRNP particle arrangement on nascent hnRNA is non-random and sequence-dependent and serves to condense and stabilize the transcripts and minimize tangling and knotting. Packaging plays a role in various processes such as transcription, pre-mRNA processing, RNA nuclear export, subcellular location, mRNA translation and stability of mature mRNAs. Forms hnRNP particles with at least 20 other different hnRNP and heterogeneous nuclear RNA in the nucleus. Involved in transport of specific mRNAs to the cytoplasm in oligodendrocytes and neurons: acts by specifically recognizing and binding the A2RE (21 nucleotide hnRNP A2 response element) or the A2RE11 (derivative 11 nucleotide oligonucleotide) sequence motifs present on some mRNAs, and promotes their transport to the cytoplasm (By similarity). Specifically binds single-stranded telomeric DNA sequences, protecting telomeric DNA repeat against endonuclease digestion (By similarity). Also binds other RNA molecules, such as primary miRNA (pri-miRNAs): acts as a nuclear 'reader' of the N6-methyladenosine (m6A) mark by specifically recognizing and binding a subset of nuclear m6A-containing pri-miRNAs. Binding to m6A-containing pri-miRNAs promotes pri-miRNA processing by enhancing binding of DGCR8 to pri-miRNA transcripts. Involved in miRNA sorting into exosomes following sumoylation, possibly by binding (m6A)-containing pre-miRNAs. Acts as a regulator of efficiency of mRNA splicing, possibly by binding to m6A-containing pre-mRNAs (By similarity). Plays a role in the splicing of pyruvate kinase PKM by binding repressively to sequences flanking PKM exon 9, inhibiting exon 9 inclusion and resulting in exon 10 inclusion and production of the PKM M2 isoform (By similarity).</text>
</comment>
<comment type="subunit">
    <text evidence="4">Identified in the spliceosome C complex. Identified in a IGF2BP1-dependent mRNP granule complex containing untranslated mRNAs. Interacts with IGF2BP1. Interacts with C9orf72. Interacts with DGCR8. Interacts with TARDBP. Interacts with CKAP5 (By similarity). Interacts with PPIA/CYPA (By similarity). Interacts (via C-terminus) with FAM76B; the interaction results in retention of HNRNPA2B1 in the nucleus and inhibition of the NF-kappa-B-mediated inflammatory pathway (By similarity). Interacts with NF-kappa-B inhibitors NFKBIA and NFKBIE; the interaction may be mediated by the RRM2 domain of HNRNPA2B1, and HNRNPA2B1 may interact simultaneously with FAM76B and either NFKBIA or NFKBIE to form a complex (By similarity).</text>
</comment>
<comment type="subcellular location">
    <subcellularLocation>
        <location evidence="4">Nucleus</location>
        <location evidence="4">Nucleoplasm</location>
    </subcellularLocation>
    <subcellularLocation>
        <location evidence="4">Cytoplasmic granule</location>
    </subcellularLocation>
    <subcellularLocation>
        <location evidence="4">Secreted</location>
        <location evidence="4">Extracellular exosome</location>
    </subcellularLocation>
    <text evidence="4">Localized in cytoplasmic mRNP granules containing untranslated mRNAs. Component of ribonucleosomes. Not found in the nucleolus. Found in exosomes follwong sumoylation.</text>
</comment>
<comment type="domain">
    <text evidence="4">The disordered region, when incubated at high concentration, is able to polymerize into labile, amyloid-like fibers and form cross-beta polymerization structures, probably driving the formation of hydrogels. In contrast to irreversible, pathogenic amyloids, the fibers polymerized from LC regions disassemble upon dilution. A number of evidence suggests that formation of cross-beta structures by LC regions mediate the formation of RNA granules, liquid-like droplets, and hydrogels.</text>
</comment>
<comment type="PTM">
    <text evidence="4">Sumoylated in exosomes, promoting miRNAs-binding.</text>
</comment>
<comment type="PTM">
    <text evidence="2 4">Asymmetric dimethylation at Arg-266 constitutes the major methylation site (By similarity). According to a report, methylation affects subcellular location and promotes nuclear localization (By similarity). According to another report, methylation at Arg-266 does not influence nucleocytoplasmic shuttling (By similarity).</text>
</comment>
<dbReference type="EMBL" id="CR858535">
    <property type="protein sequence ID" value="CAH90762.1"/>
    <property type="molecule type" value="mRNA"/>
</dbReference>
<dbReference type="RefSeq" id="NP_001127331.1">
    <property type="nucleotide sequence ID" value="NM_001133859.2"/>
</dbReference>
<dbReference type="SMR" id="Q5RBU8"/>
<dbReference type="STRING" id="9601.ENSPPYP00000019858"/>
<dbReference type="GeneID" id="100174392"/>
<dbReference type="KEGG" id="pon:100174392"/>
<dbReference type="CTD" id="3181"/>
<dbReference type="eggNOG" id="KOG0118">
    <property type="taxonomic scope" value="Eukaryota"/>
</dbReference>
<dbReference type="InParanoid" id="Q5RBU8"/>
<dbReference type="OrthoDB" id="1875751at2759"/>
<dbReference type="Proteomes" id="UP000001595">
    <property type="component" value="Unplaced"/>
</dbReference>
<dbReference type="GO" id="GO:0071013">
    <property type="term" value="C:catalytic step 2 spliceosome"/>
    <property type="evidence" value="ECO:0007669"/>
    <property type="project" value="TreeGrafter"/>
</dbReference>
<dbReference type="GO" id="GO:0005737">
    <property type="term" value="C:cytoplasm"/>
    <property type="evidence" value="ECO:0000250"/>
    <property type="project" value="UniProtKB"/>
</dbReference>
<dbReference type="GO" id="GO:0070062">
    <property type="term" value="C:extracellular exosome"/>
    <property type="evidence" value="ECO:0000250"/>
    <property type="project" value="UniProtKB"/>
</dbReference>
<dbReference type="GO" id="GO:0005654">
    <property type="term" value="C:nucleoplasm"/>
    <property type="evidence" value="ECO:0007669"/>
    <property type="project" value="UniProtKB-SubCell"/>
</dbReference>
<dbReference type="GO" id="GO:0005634">
    <property type="term" value="C:nucleus"/>
    <property type="evidence" value="ECO:0000250"/>
    <property type="project" value="UniProtKB"/>
</dbReference>
<dbReference type="GO" id="GO:1990904">
    <property type="term" value="C:ribonucleoprotein complex"/>
    <property type="evidence" value="ECO:0000250"/>
    <property type="project" value="UniProtKB"/>
</dbReference>
<dbReference type="GO" id="GO:0035198">
    <property type="term" value="F:miRNA binding"/>
    <property type="evidence" value="ECO:0000250"/>
    <property type="project" value="UniProtKB"/>
</dbReference>
<dbReference type="GO" id="GO:0003730">
    <property type="term" value="F:mRNA 3'-UTR binding"/>
    <property type="evidence" value="ECO:0000250"/>
    <property type="project" value="UniProtKB"/>
</dbReference>
<dbReference type="GO" id="GO:1990247">
    <property type="term" value="F:N6-methyladenosine-containing RNA reader activity"/>
    <property type="evidence" value="ECO:0000250"/>
    <property type="project" value="UniProtKB"/>
</dbReference>
<dbReference type="GO" id="GO:0043047">
    <property type="term" value="F:single-stranded telomeric DNA binding"/>
    <property type="evidence" value="ECO:0000250"/>
    <property type="project" value="UniProtKB"/>
</dbReference>
<dbReference type="GO" id="GO:1990428">
    <property type="term" value="P:miRNA transport"/>
    <property type="evidence" value="ECO:0000250"/>
    <property type="project" value="UniProtKB"/>
</dbReference>
<dbReference type="GO" id="GO:0006406">
    <property type="term" value="P:mRNA export from nucleus"/>
    <property type="evidence" value="ECO:0000250"/>
    <property type="project" value="UniProtKB"/>
</dbReference>
<dbReference type="GO" id="GO:0000398">
    <property type="term" value="P:mRNA splicing, via spliceosome"/>
    <property type="evidence" value="ECO:0000250"/>
    <property type="project" value="UniProtKB"/>
</dbReference>
<dbReference type="GO" id="GO:0031053">
    <property type="term" value="P:primary miRNA processing"/>
    <property type="evidence" value="ECO:0000250"/>
    <property type="project" value="UniProtKB"/>
</dbReference>
<dbReference type="CDD" id="cd12762">
    <property type="entry name" value="RRM1_hnRNPA2B1"/>
    <property type="match status" value="1"/>
</dbReference>
<dbReference type="CDD" id="cd12581">
    <property type="entry name" value="RRM2_hnRNPA2B1"/>
    <property type="match status" value="1"/>
</dbReference>
<dbReference type="FunFam" id="3.30.70.330:FF:000040">
    <property type="entry name" value="Heterogeneous nuclear ribonucleoprotein A2/B1"/>
    <property type="match status" value="1"/>
</dbReference>
<dbReference type="FunFam" id="3.30.70.330:FF:000108">
    <property type="entry name" value="Heterogeneous nuclear ribonucleoproteins A2/B1"/>
    <property type="match status" value="1"/>
</dbReference>
<dbReference type="Gene3D" id="3.30.70.330">
    <property type="match status" value="2"/>
</dbReference>
<dbReference type="InterPro" id="IPR021662">
    <property type="entry name" value="HnRNPA1/A2_C"/>
</dbReference>
<dbReference type="InterPro" id="IPR034486">
    <property type="entry name" value="hnRNPA2B1_RRM1"/>
</dbReference>
<dbReference type="InterPro" id="IPR012677">
    <property type="entry name" value="Nucleotide-bd_a/b_plait_sf"/>
</dbReference>
<dbReference type="InterPro" id="IPR035979">
    <property type="entry name" value="RBD_domain_sf"/>
</dbReference>
<dbReference type="InterPro" id="IPR000504">
    <property type="entry name" value="RRM_dom"/>
</dbReference>
<dbReference type="PANTHER" id="PTHR48026:SF13">
    <property type="entry name" value="HETEROGENEOUS NUCLEAR RIBONUCLEOPROTEINS A2_B1"/>
    <property type="match status" value="1"/>
</dbReference>
<dbReference type="PANTHER" id="PTHR48026">
    <property type="entry name" value="HOMOLOGOUS TO DROSOPHILA SQD (SQUID) PROTEIN"/>
    <property type="match status" value="1"/>
</dbReference>
<dbReference type="Pfam" id="PF11627">
    <property type="entry name" value="HnRNPA1_LC"/>
    <property type="match status" value="1"/>
</dbReference>
<dbReference type="Pfam" id="PF00076">
    <property type="entry name" value="RRM_1"/>
    <property type="match status" value="2"/>
</dbReference>
<dbReference type="SMART" id="SM00360">
    <property type="entry name" value="RRM"/>
    <property type="match status" value="2"/>
</dbReference>
<dbReference type="SUPFAM" id="SSF54928">
    <property type="entry name" value="RNA-binding domain, RBD"/>
    <property type="match status" value="2"/>
</dbReference>
<dbReference type="PROSITE" id="PS50102">
    <property type="entry name" value="RRM"/>
    <property type="match status" value="2"/>
</dbReference>
<gene>
    <name type="primary">HNRNPA2B1</name>
    <name type="synonym">HNRPA2B1</name>
</gene>
<accession>Q5RBU8</accession>
<organism>
    <name type="scientific">Pongo abelii</name>
    <name type="common">Sumatran orangutan</name>
    <name type="synonym">Pongo pygmaeus abelii</name>
    <dbReference type="NCBI Taxonomy" id="9601"/>
    <lineage>
        <taxon>Eukaryota</taxon>
        <taxon>Metazoa</taxon>
        <taxon>Chordata</taxon>
        <taxon>Craniata</taxon>
        <taxon>Vertebrata</taxon>
        <taxon>Euteleostomi</taxon>
        <taxon>Mammalia</taxon>
        <taxon>Eutheria</taxon>
        <taxon>Euarchontoglires</taxon>
        <taxon>Primates</taxon>
        <taxon>Haplorrhini</taxon>
        <taxon>Catarrhini</taxon>
        <taxon>Hominidae</taxon>
        <taxon>Pongo</taxon>
    </lineage>
</organism>